<organism>
    <name type="scientific">Listeria welshimeri serovar 6b (strain ATCC 35897 / DSM 20650 / CCUG 15529 / CIP 8149 / NCTC 11857 / SLCC 5334 / V8)</name>
    <dbReference type="NCBI Taxonomy" id="386043"/>
    <lineage>
        <taxon>Bacteria</taxon>
        <taxon>Bacillati</taxon>
        <taxon>Bacillota</taxon>
        <taxon>Bacilli</taxon>
        <taxon>Bacillales</taxon>
        <taxon>Listeriaceae</taxon>
        <taxon>Listeria</taxon>
    </lineage>
</organism>
<evidence type="ECO:0000255" key="1">
    <source>
        <dbReference type="HAMAP-Rule" id="MF_00086"/>
    </source>
</evidence>
<protein>
    <recommendedName>
        <fullName evidence="1">S-adenosylmethionine synthase</fullName>
        <shortName evidence="1">AdoMet synthase</shortName>
        <ecNumber evidence="1">2.5.1.6</ecNumber>
    </recommendedName>
    <alternativeName>
        <fullName evidence="1">MAT</fullName>
    </alternativeName>
    <alternativeName>
        <fullName evidence="1">Methionine adenosyltransferase</fullName>
    </alternativeName>
</protein>
<sequence length="399" mass="43545">MAKNRHLFTSESVSDGHPDKIADQISDAILDAIISKDPDARVACETTVTTGLVLVAGEITTSVYVDIPKIVRDTIKEIGYTRAKYGFDAETCAVLTAIDEQSPDIAQGVDEALESRSGSEIDAAIEAIGAGDQGLMFGFATDETEELMPLPIFLAHGLARKLTELRKTKKLDYLRPDAKTQVTVEYDELNQPVRIDTIVVSTQHHPDITQEEIAKDLHTYLFPEVIDPSFLDEDTKYFINPTGRFVIGGPLGDAGLTGRKIIVDTYGGYARHGGGAFSGKDPTKVDRSGAYAARYVAKNIVAAGLAKKVEVQLAYAIGVARPVSISIDTYGTSDYSEQELIDGVNALFDLRPAGIIHMLDLRRPIYRQTAAFGHFGRSDLDLPWERTDKAEALKKLIVK</sequence>
<proteinExistence type="inferred from homology"/>
<feature type="chain" id="PRO_0000302933" description="S-adenosylmethionine synthase">
    <location>
        <begin position="1"/>
        <end position="399"/>
    </location>
</feature>
<feature type="region of interest" description="Flexible loop" evidence="1">
    <location>
        <begin position="101"/>
        <end position="111"/>
    </location>
</feature>
<feature type="binding site" description="in other chain" evidence="1">
    <location>
        <position position="17"/>
    </location>
    <ligand>
        <name>ATP</name>
        <dbReference type="ChEBI" id="CHEBI:30616"/>
        <note>ligand shared between two neighboring subunits</note>
    </ligand>
</feature>
<feature type="binding site" evidence="1">
    <location>
        <position position="19"/>
    </location>
    <ligand>
        <name>Mg(2+)</name>
        <dbReference type="ChEBI" id="CHEBI:18420"/>
    </ligand>
</feature>
<feature type="binding site" evidence="1">
    <location>
        <position position="45"/>
    </location>
    <ligand>
        <name>K(+)</name>
        <dbReference type="ChEBI" id="CHEBI:29103"/>
    </ligand>
</feature>
<feature type="binding site" description="in other chain" evidence="1">
    <location>
        <position position="58"/>
    </location>
    <ligand>
        <name>L-methionine</name>
        <dbReference type="ChEBI" id="CHEBI:57844"/>
        <note>ligand shared between two neighboring subunits</note>
    </ligand>
</feature>
<feature type="binding site" description="in other chain" evidence="1">
    <location>
        <position position="101"/>
    </location>
    <ligand>
        <name>L-methionine</name>
        <dbReference type="ChEBI" id="CHEBI:57844"/>
        <note>ligand shared between two neighboring subunits</note>
    </ligand>
</feature>
<feature type="binding site" description="in other chain" evidence="1">
    <location>
        <begin position="177"/>
        <end position="179"/>
    </location>
    <ligand>
        <name>ATP</name>
        <dbReference type="ChEBI" id="CHEBI:30616"/>
        <note>ligand shared between two neighboring subunits</note>
    </ligand>
</feature>
<feature type="binding site" description="in other chain" evidence="1">
    <location>
        <begin position="244"/>
        <end position="245"/>
    </location>
    <ligand>
        <name>ATP</name>
        <dbReference type="ChEBI" id="CHEBI:30616"/>
        <note>ligand shared between two neighboring subunits</note>
    </ligand>
</feature>
<feature type="binding site" evidence="1">
    <location>
        <position position="253"/>
    </location>
    <ligand>
        <name>ATP</name>
        <dbReference type="ChEBI" id="CHEBI:30616"/>
        <note>ligand shared between two neighboring subunits</note>
    </ligand>
</feature>
<feature type="binding site" evidence="1">
    <location>
        <position position="253"/>
    </location>
    <ligand>
        <name>L-methionine</name>
        <dbReference type="ChEBI" id="CHEBI:57844"/>
        <note>ligand shared between two neighboring subunits</note>
    </ligand>
</feature>
<feature type="binding site" description="in other chain" evidence="1">
    <location>
        <begin position="259"/>
        <end position="260"/>
    </location>
    <ligand>
        <name>ATP</name>
        <dbReference type="ChEBI" id="CHEBI:30616"/>
        <note>ligand shared between two neighboring subunits</note>
    </ligand>
</feature>
<feature type="binding site" evidence="1">
    <location>
        <position position="276"/>
    </location>
    <ligand>
        <name>ATP</name>
        <dbReference type="ChEBI" id="CHEBI:30616"/>
        <note>ligand shared between two neighboring subunits</note>
    </ligand>
</feature>
<feature type="binding site" evidence="1">
    <location>
        <position position="280"/>
    </location>
    <ligand>
        <name>ATP</name>
        <dbReference type="ChEBI" id="CHEBI:30616"/>
        <note>ligand shared between two neighboring subunits</note>
    </ligand>
</feature>
<feature type="binding site" description="in other chain" evidence="1">
    <location>
        <position position="284"/>
    </location>
    <ligand>
        <name>L-methionine</name>
        <dbReference type="ChEBI" id="CHEBI:57844"/>
        <note>ligand shared between two neighboring subunits</note>
    </ligand>
</feature>
<comment type="function">
    <text evidence="1">Catalyzes the formation of S-adenosylmethionine (AdoMet) from methionine and ATP. The overall synthetic reaction is composed of two sequential steps, AdoMet formation and the subsequent tripolyphosphate hydrolysis which occurs prior to release of AdoMet from the enzyme.</text>
</comment>
<comment type="catalytic activity">
    <reaction evidence="1">
        <text>L-methionine + ATP + H2O = S-adenosyl-L-methionine + phosphate + diphosphate</text>
        <dbReference type="Rhea" id="RHEA:21080"/>
        <dbReference type="ChEBI" id="CHEBI:15377"/>
        <dbReference type="ChEBI" id="CHEBI:30616"/>
        <dbReference type="ChEBI" id="CHEBI:33019"/>
        <dbReference type="ChEBI" id="CHEBI:43474"/>
        <dbReference type="ChEBI" id="CHEBI:57844"/>
        <dbReference type="ChEBI" id="CHEBI:59789"/>
        <dbReference type="EC" id="2.5.1.6"/>
    </reaction>
</comment>
<comment type="cofactor">
    <cofactor evidence="1">
        <name>Mg(2+)</name>
        <dbReference type="ChEBI" id="CHEBI:18420"/>
    </cofactor>
    <text evidence="1">Binds 2 divalent ions per subunit.</text>
</comment>
<comment type="cofactor">
    <cofactor evidence="1">
        <name>K(+)</name>
        <dbReference type="ChEBI" id="CHEBI:29103"/>
    </cofactor>
    <text evidence="1">Binds 1 potassium ion per subunit.</text>
</comment>
<comment type="pathway">
    <text evidence="1">Amino-acid biosynthesis; S-adenosyl-L-methionine biosynthesis; S-adenosyl-L-methionine from L-methionine: step 1/1.</text>
</comment>
<comment type="subunit">
    <text evidence="1">Homotetramer; dimer of dimers.</text>
</comment>
<comment type="subcellular location">
    <subcellularLocation>
        <location evidence="1">Cytoplasm</location>
    </subcellularLocation>
</comment>
<comment type="similarity">
    <text evidence="1">Belongs to the AdoMet synthase family.</text>
</comment>
<dbReference type="EC" id="2.5.1.6" evidence="1"/>
<dbReference type="EMBL" id="AM263198">
    <property type="protein sequence ID" value="CAK21101.1"/>
    <property type="molecule type" value="Genomic_DNA"/>
</dbReference>
<dbReference type="RefSeq" id="WP_011702465.1">
    <property type="nucleotide sequence ID" value="NC_008555.1"/>
</dbReference>
<dbReference type="SMR" id="A0AJB9"/>
<dbReference type="STRING" id="386043.lwe1683"/>
<dbReference type="GeneID" id="61189559"/>
<dbReference type="KEGG" id="lwe:lwe1683"/>
<dbReference type="eggNOG" id="COG0192">
    <property type="taxonomic scope" value="Bacteria"/>
</dbReference>
<dbReference type="HOGENOM" id="CLU_041802_1_1_9"/>
<dbReference type="OrthoDB" id="9801686at2"/>
<dbReference type="UniPathway" id="UPA00315">
    <property type="reaction ID" value="UER00080"/>
</dbReference>
<dbReference type="Proteomes" id="UP000000779">
    <property type="component" value="Chromosome"/>
</dbReference>
<dbReference type="GO" id="GO:0005737">
    <property type="term" value="C:cytoplasm"/>
    <property type="evidence" value="ECO:0007669"/>
    <property type="project" value="UniProtKB-SubCell"/>
</dbReference>
<dbReference type="GO" id="GO:0005524">
    <property type="term" value="F:ATP binding"/>
    <property type="evidence" value="ECO:0007669"/>
    <property type="project" value="UniProtKB-UniRule"/>
</dbReference>
<dbReference type="GO" id="GO:0000287">
    <property type="term" value="F:magnesium ion binding"/>
    <property type="evidence" value="ECO:0007669"/>
    <property type="project" value="UniProtKB-UniRule"/>
</dbReference>
<dbReference type="GO" id="GO:0004478">
    <property type="term" value="F:methionine adenosyltransferase activity"/>
    <property type="evidence" value="ECO:0007669"/>
    <property type="project" value="UniProtKB-UniRule"/>
</dbReference>
<dbReference type="GO" id="GO:0006730">
    <property type="term" value="P:one-carbon metabolic process"/>
    <property type="evidence" value="ECO:0007669"/>
    <property type="project" value="UniProtKB-KW"/>
</dbReference>
<dbReference type="GO" id="GO:0006556">
    <property type="term" value="P:S-adenosylmethionine biosynthetic process"/>
    <property type="evidence" value="ECO:0007669"/>
    <property type="project" value="UniProtKB-UniRule"/>
</dbReference>
<dbReference type="CDD" id="cd18079">
    <property type="entry name" value="S-AdoMet_synt"/>
    <property type="match status" value="1"/>
</dbReference>
<dbReference type="FunFam" id="3.30.300.10:FF:000003">
    <property type="entry name" value="S-adenosylmethionine synthase"/>
    <property type="match status" value="1"/>
</dbReference>
<dbReference type="FunFam" id="3.30.300.10:FF:000004">
    <property type="entry name" value="S-adenosylmethionine synthase"/>
    <property type="match status" value="1"/>
</dbReference>
<dbReference type="Gene3D" id="3.30.300.10">
    <property type="match status" value="3"/>
</dbReference>
<dbReference type="HAMAP" id="MF_00086">
    <property type="entry name" value="S_AdoMet_synth1"/>
    <property type="match status" value="1"/>
</dbReference>
<dbReference type="InterPro" id="IPR022631">
    <property type="entry name" value="ADOMET_SYNTHASE_CS"/>
</dbReference>
<dbReference type="InterPro" id="IPR022630">
    <property type="entry name" value="S-AdoMet_synt_C"/>
</dbReference>
<dbReference type="InterPro" id="IPR022629">
    <property type="entry name" value="S-AdoMet_synt_central"/>
</dbReference>
<dbReference type="InterPro" id="IPR022628">
    <property type="entry name" value="S-AdoMet_synt_N"/>
</dbReference>
<dbReference type="InterPro" id="IPR002133">
    <property type="entry name" value="S-AdoMet_synthetase"/>
</dbReference>
<dbReference type="InterPro" id="IPR022636">
    <property type="entry name" value="S-AdoMet_synthetase_sfam"/>
</dbReference>
<dbReference type="NCBIfam" id="TIGR01034">
    <property type="entry name" value="metK"/>
    <property type="match status" value="1"/>
</dbReference>
<dbReference type="PANTHER" id="PTHR11964">
    <property type="entry name" value="S-ADENOSYLMETHIONINE SYNTHETASE"/>
    <property type="match status" value="1"/>
</dbReference>
<dbReference type="Pfam" id="PF02773">
    <property type="entry name" value="S-AdoMet_synt_C"/>
    <property type="match status" value="1"/>
</dbReference>
<dbReference type="Pfam" id="PF02772">
    <property type="entry name" value="S-AdoMet_synt_M"/>
    <property type="match status" value="1"/>
</dbReference>
<dbReference type="Pfam" id="PF00438">
    <property type="entry name" value="S-AdoMet_synt_N"/>
    <property type="match status" value="1"/>
</dbReference>
<dbReference type="PIRSF" id="PIRSF000497">
    <property type="entry name" value="MAT"/>
    <property type="match status" value="1"/>
</dbReference>
<dbReference type="SUPFAM" id="SSF55973">
    <property type="entry name" value="S-adenosylmethionine synthetase"/>
    <property type="match status" value="3"/>
</dbReference>
<dbReference type="PROSITE" id="PS00376">
    <property type="entry name" value="ADOMET_SYNTHASE_1"/>
    <property type="match status" value="1"/>
</dbReference>
<dbReference type="PROSITE" id="PS00377">
    <property type="entry name" value="ADOMET_SYNTHASE_2"/>
    <property type="match status" value="1"/>
</dbReference>
<accession>A0AJB9</accession>
<keyword id="KW-0067">ATP-binding</keyword>
<keyword id="KW-0963">Cytoplasm</keyword>
<keyword id="KW-0460">Magnesium</keyword>
<keyword id="KW-0479">Metal-binding</keyword>
<keyword id="KW-0547">Nucleotide-binding</keyword>
<keyword id="KW-0554">One-carbon metabolism</keyword>
<keyword id="KW-0630">Potassium</keyword>
<keyword id="KW-0808">Transferase</keyword>
<gene>
    <name evidence="1" type="primary">metK</name>
    <name type="ordered locus">lwe1683</name>
</gene>
<name>METK_LISW6</name>
<reference key="1">
    <citation type="journal article" date="2006" name="J. Bacteriol.">
        <title>Whole-genome sequence of Listeria welshimeri reveals common steps in genome reduction with Listeria innocua as compared to Listeria monocytogenes.</title>
        <authorList>
            <person name="Hain T."/>
            <person name="Steinweg C."/>
            <person name="Kuenne C.T."/>
            <person name="Billion A."/>
            <person name="Ghai R."/>
            <person name="Chatterjee S.S."/>
            <person name="Domann E."/>
            <person name="Kaerst U."/>
            <person name="Goesmann A."/>
            <person name="Bekel T."/>
            <person name="Bartels D."/>
            <person name="Kaiser O."/>
            <person name="Meyer F."/>
            <person name="Puehler A."/>
            <person name="Weisshaar B."/>
            <person name="Wehland J."/>
            <person name="Liang C."/>
            <person name="Dandekar T."/>
            <person name="Lampidis R."/>
            <person name="Kreft J."/>
            <person name="Goebel W."/>
            <person name="Chakraborty T."/>
        </authorList>
    </citation>
    <scope>NUCLEOTIDE SEQUENCE [LARGE SCALE GENOMIC DNA]</scope>
    <source>
        <strain>ATCC 35897 / DSM 20650 / CCUG 15529 / CIP 8149 / NCTC 11857 / SLCC 5334 / V8</strain>
    </source>
</reference>